<organism>
    <name type="scientific">Pectinaria gouldii</name>
    <name type="common">Trumpet worm</name>
    <name type="synonym">Ice-cream cone worm</name>
    <dbReference type="NCBI Taxonomy" id="260746"/>
    <lineage>
        <taxon>Eukaryota</taxon>
        <taxon>Metazoa</taxon>
        <taxon>Spiralia</taxon>
        <taxon>Lophotrochozoa</taxon>
        <taxon>Annelida</taxon>
        <taxon>Polychaeta</taxon>
        <taxon>Sedentaria</taxon>
        <taxon>Canalipalpata</taxon>
        <taxon>Terebellida</taxon>
        <taxon>Terebelliformia</taxon>
        <taxon>Pectinariidae</taxon>
        <taxon>Pectinaria</taxon>
    </lineage>
</organism>
<feature type="chain" id="PRO_0000194748" description="Small ribosomal subunit protein eS21">
    <location>
        <begin position="1"/>
        <end position="85"/>
    </location>
</feature>
<comment type="subunit">
    <text evidence="1">Component of the 40S small ribosomal subunit.</text>
</comment>
<comment type="subcellular location">
    <subcellularLocation>
        <location evidence="1">Cytoplasm</location>
        <location evidence="1">Cytosol</location>
    </subcellularLocation>
    <subcellularLocation>
        <location evidence="1">Cytoplasm</location>
    </subcellularLocation>
    <subcellularLocation>
        <location evidence="2">Rough endoplasmic reticulum</location>
    </subcellularLocation>
    <text evidence="1 2">Detected on cytosolic polysomes (By similarity). Detected in ribosomes that are associated with the rough endoplasmic reticulum (By similarity).</text>
</comment>
<comment type="similarity">
    <text evidence="3">Belongs to the eukaryotic ribosomal protein eS21 family.</text>
</comment>
<name>RS21_PECGU</name>
<gene>
    <name type="primary">rps-21</name>
</gene>
<dbReference type="EMBL" id="AY500992">
    <property type="protein sequence ID" value="AAR99374.1"/>
    <property type="molecule type" value="mRNA"/>
</dbReference>
<dbReference type="SMR" id="Q6RF66"/>
<dbReference type="GO" id="GO:0005829">
    <property type="term" value="C:cytosol"/>
    <property type="evidence" value="ECO:0007669"/>
    <property type="project" value="UniProtKB-SubCell"/>
</dbReference>
<dbReference type="GO" id="GO:1990904">
    <property type="term" value="C:ribonucleoprotein complex"/>
    <property type="evidence" value="ECO:0007669"/>
    <property type="project" value="UniProtKB-KW"/>
</dbReference>
<dbReference type="GO" id="GO:0005840">
    <property type="term" value="C:ribosome"/>
    <property type="evidence" value="ECO:0007669"/>
    <property type="project" value="UniProtKB-KW"/>
</dbReference>
<dbReference type="GO" id="GO:0005791">
    <property type="term" value="C:rough endoplasmic reticulum"/>
    <property type="evidence" value="ECO:0007669"/>
    <property type="project" value="UniProtKB-SubCell"/>
</dbReference>
<dbReference type="GO" id="GO:0003735">
    <property type="term" value="F:structural constituent of ribosome"/>
    <property type="evidence" value="ECO:0007669"/>
    <property type="project" value="InterPro"/>
</dbReference>
<dbReference type="GO" id="GO:0006412">
    <property type="term" value="P:translation"/>
    <property type="evidence" value="ECO:0007669"/>
    <property type="project" value="InterPro"/>
</dbReference>
<dbReference type="FunFam" id="3.30.1230.20:FF:000001">
    <property type="entry name" value="40S ribosomal protein S21"/>
    <property type="match status" value="1"/>
</dbReference>
<dbReference type="Gene3D" id="3.30.1230.20">
    <property type="match status" value="1"/>
</dbReference>
<dbReference type="InterPro" id="IPR001931">
    <property type="entry name" value="Ribosomal_eS21"/>
</dbReference>
<dbReference type="InterPro" id="IPR018279">
    <property type="entry name" value="Ribosomal_eS21_CS"/>
</dbReference>
<dbReference type="InterPro" id="IPR038579">
    <property type="entry name" value="Ribosomal_eS21_sf"/>
</dbReference>
<dbReference type="PANTHER" id="PTHR10442">
    <property type="entry name" value="40S RIBOSOMAL PROTEIN S21"/>
    <property type="match status" value="1"/>
</dbReference>
<dbReference type="Pfam" id="PF01249">
    <property type="entry name" value="Ribosomal_S21e"/>
    <property type="match status" value="1"/>
</dbReference>
<dbReference type="PIRSF" id="PIRSF002148">
    <property type="entry name" value="Ribosomal_S21e"/>
    <property type="match status" value="1"/>
</dbReference>
<dbReference type="PROSITE" id="PS00996">
    <property type="entry name" value="RIBOSOMAL_S21E"/>
    <property type="match status" value="1"/>
</dbReference>
<accession>Q6RF66</accession>
<sequence length="85" mass="9442">MQNDQGEIVDVYIPRKCSATNNILAAKDHASVQINMAEIDPQTGRMTGKQITYALCGELRRMGEADDSVNRLAMKDKMLSEVFGH</sequence>
<proteinExistence type="inferred from homology"/>
<keyword id="KW-0963">Cytoplasm</keyword>
<keyword id="KW-0256">Endoplasmic reticulum</keyword>
<keyword id="KW-0687">Ribonucleoprotein</keyword>
<keyword id="KW-0689">Ribosomal protein</keyword>
<protein>
    <recommendedName>
        <fullName evidence="3">Small ribosomal subunit protein eS21</fullName>
    </recommendedName>
    <alternativeName>
        <fullName>40S ribosomal protein S21</fullName>
    </alternativeName>
</protein>
<reference key="1">
    <citation type="submission" date="2003-12" db="EMBL/GenBank/DDBJ databases">
        <authorList>
            <person name="Olson A.H."/>
            <person name="Tauer T.J."/>
        </authorList>
    </citation>
    <scope>NUCLEOTIDE SEQUENCE [MRNA]</scope>
</reference>
<evidence type="ECO:0000250" key="1">
    <source>
        <dbReference type="UniProtKB" id="P63220"/>
    </source>
</evidence>
<evidence type="ECO:0000250" key="2">
    <source>
        <dbReference type="UniProtKB" id="P63221"/>
    </source>
</evidence>
<evidence type="ECO:0000305" key="3"/>